<evidence type="ECO:0000250" key="1"/>
<evidence type="ECO:0000255" key="2"/>
<evidence type="ECO:0000269" key="3">
    <source>
    </source>
</evidence>
<evidence type="ECO:0000305" key="4"/>
<comment type="function">
    <text evidence="1">Has a role in mitochondrial fission. Has a role in outer membrane fission but not matrix separation (By similarity).</text>
</comment>
<comment type="subcellular location">
    <subcellularLocation>
        <location evidence="1">Mitochondrion outer membrane</location>
        <topology evidence="1">Single-pass membrane protein</topology>
    </subcellularLocation>
</comment>
<comment type="developmental stage">
    <text evidence="3">Highly expressed during fruit body ripening. Levels increase during fruit body stages 1, 2 and 3, the stages of ascospore formation and maturation. Levels decrease during mycelium aging.</text>
</comment>
<comment type="domain">
    <text evidence="1">The C-terminus is required for mitochondrial localization, while the N-terminus is necessary for mitochondrial fission.</text>
</comment>
<comment type="similarity">
    <text evidence="4">Belongs to the FIS1 family.</text>
</comment>
<sequence>MPSDNLPHAVDAESPLKEAELQVLRNQYEKEGQFVGVQTKFNYAWGLIKSDKRPEQQMGVRLLTDIFRDHTERRRECLYYLALGNYKLGNYAEARRYNDRLLENEPANLQSQSLRGLIDDKVAKEGMLGVAIISGVALAAGLVGSALWRGMSRRR</sequence>
<feature type="chain" id="PRO_0000256190" description="Mitochondrial fission 1 protein">
    <location>
        <begin position="1"/>
        <end position="155"/>
    </location>
</feature>
<feature type="topological domain" description="Cytoplasmic" evidence="2">
    <location>
        <begin position="1"/>
        <end position="127"/>
    </location>
</feature>
<feature type="transmembrane region" description="Helical" evidence="2">
    <location>
        <begin position="128"/>
        <end position="148"/>
    </location>
</feature>
<feature type="topological domain" description="Mitochondrial intermembrane" evidence="2">
    <location>
        <begin position="149"/>
        <end position="155"/>
    </location>
</feature>
<feature type="repeat" description="TPR">
    <location>
        <begin position="75"/>
        <end position="108"/>
    </location>
</feature>
<dbReference type="EMBL" id="AY273171">
    <property type="protein sequence ID" value="AAQ17209.1"/>
    <property type="molecule type" value="Genomic_DNA"/>
</dbReference>
<dbReference type="SMR" id="Q6WRS2"/>
<dbReference type="OrthoDB" id="421154at2759"/>
<dbReference type="GO" id="GO:0005741">
    <property type="term" value="C:mitochondrial outer membrane"/>
    <property type="evidence" value="ECO:0007669"/>
    <property type="project" value="UniProtKB-SubCell"/>
</dbReference>
<dbReference type="GO" id="GO:0005778">
    <property type="term" value="C:peroxisomal membrane"/>
    <property type="evidence" value="ECO:0007669"/>
    <property type="project" value="TreeGrafter"/>
</dbReference>
<dbReference type="GO" id="GO:0000422">
    <property type="term" value="P:autophagy of mitochondrion"/>
    <property type="evidence" value="ECO:0007669"/>
    <property type="project" value="TreeGrafter"/>
</dbReference>
<dbReference type="GO" id="GO:0000266">
    <property type="term" value="P:mitochondrial fission"/>
    <property type="evidence" value="ECO:0007669"/>
    <property type="project" value="InterPro"/>
</dbReference>
<dbReference type="GO" id="GO:0016559">
    <property type="term" value="P:peroxisome fission"/>
    <property type="evidence" value="ECO:0007669"/>
    <property type="project" value="TreeGrafter"/>
</dbReference>
<dbReference type="CDD" id="cd12212">
    <property type="entry name" value="Fis1"/>
    <property type="match status" value="1"/>
</dbReference>
<dbReference type="FunFam" id="1.25.40.10:FF:000179">
    <property type="entry name" value="Mitochondrial fission 1 protein"/>
    <property type="match status" value="1"/>
</dbReference>
<dbReference type="Gene3D" id="1.25.40.10">
    <property type="entry name" value="Tetratricopeptide repeat domain"/>
    <property type="match status" value="1"/>
</dbReference>
<dbReference type="InterPro" id="IPR016543">
    <property type="entry name" value="Fis1"/>
</dbReference>
<dbReference type="InterPro" id="IPR033745">
    <property type="entry name" value="Fis1_cytosol"/>
</dbReference>
<dbReference type="InterPro" id="IPR028061">
    <property type="entry name" value="Fis1_TPR_C"/>
</dbReference>
<dbReference type="InterPro" id="IPR028058">
    <property type="entry name" value="Fis1_TPR_N"/>
</dbReference>
<dbReference type="InterPro" id="IPR011990">
    <property type="entry name" value="TPR-like_helical_dom_sf"/>
</dbReference>
<dbReference type="PANTHER" id="PTHR13247:SF0">
    <property type="entry name" value="MITOCHONDRIAL FISSION 1 PROTEIN"/>
    <property type="match status" value="1"/>
</dbReference>
<dbReference type="PANTHER" id="PTHR13247">
    <property type="entry name" value="TETRATRICOPEPTIDE REPEAT PROTEIN 11 TPR REPEAT PROTEIN 11"/>
    <property type="match status" value="1"/>
</dbReference>
<dbReference type="Pfam" id="PF14853">
    <property type="entry name" value="Fis1_TPR_C"/>
    <property type="match status" value="1"/>
</dbReference>
<dbReference type="Pfam" id="PF14852">
    <property type="entry name" value="Fis1_TPR_N"/>
    <property type="match status" value="1"/>
</dbReference>
<dbReference type="PIRSF" id="PIRSF008835">
    <property type="entry name" value="TPR_repeat_11_Fis1"/>
    <property type="match status" value="1"/>
</dbReference>
<dbReference type="SUPFAM" id="SSF48452">
    <property type="entry name" value="TPR-like"/>
    <property type="match status" value="1"/>
</dbReference>
<keyword id="KW-0472">Membrane</keyword>
<keyword id="KW-0496">Mitochondrion</keyword>
<keyword id="KW-1000">Mitochondrion outer membrane</keyword>
<keyword id="KW-0677">Repeat</keyword>
<keyword id="KW-0802">TPR repeat</keyword>
<keyword id="KW-0812">Transmembrane</keyword>
<keyword id="KW-1133">Transmembrane helix</keyword>
<name>FIS1_TUBBO</name>
<reference key="1">
    <citation type="journal article" date="2003" name="Curr. Genet.">
        <title>A putative mitochondrial fission gene from the ectomycorrhizal ascomycete Tuber borchii Vittad.: cloning, characterisation and phylogeny.</title>
        <authorList>
            <person name="Guidi C."/>
            <person name="Zeppa S."/>
            <person name="Barbieri E."/>
            <person name="Zambonelli A."/>
            <person name="Polidori E."/>
            <person name="Potenza L."/>
            <person name="Stocchi V."/>
        </authorList>
    </citation>
    <scope>NUCLEOTIDE SEQUENCE [GENOMIC DNA]</scope>
    <scope>DEVELOPMENTAL STAGE</scope>
    <source>
        <strain>ATCC 96540</strain>
    </source>
</reference>
<proteinExistence type="evidence at transcript level"/>
<gene>
    <name type="primary">FIS1</name>
</gene>
<organism>
    <name type="scientific">Tuber borchii</name>
    <name type="common">White truffle</name>
    <dbReference type="NCBI Taxonomy" id="42251"/>
    <lineage>
        <taxon>Eukaryota</taxon>
        <taxon>Fungi</taxon>
        <taxon>Dikarya</taxon>
        <taxon>Ascomycota</taxon>
        <taxon>Pezizomycotina</taxon>
        <taxon>Pezizomycetes</taxon>
        <taxon>Pezizales</taxon>
        <taxon>Tuberaceae</taxon>
        <taxon>Tuber</taxon>
    </lineage>
</organism>
<accession>Q6WRS2</accession>
<protein>
    <recommendedName>
        <fullName>Mitochondrial fission 1 protein</fullName>
    </recommendedName>
</protein>